<protein>
    <recommendedName>
        <fullName evidence="1">Glutamyl-tRNA(Gln) amidotransferase subunit A</fullName>
        <shortName evidence="1">Glu-ADT subunit A</shortName>
        <ecNumber evidence="1">6.3.5.7</ecNumber>
    </recommendedName>
</protein>
<reference key="1">
    <citation type="journal article" date="2007" name="Genome Res.">
        <title>Reductive evolution and niche adaptation inferred from the genome of Mycobacterium ulcerans, the causative agent of Buruli ulcer.</title>
        <authorList>
            <person name="Stinear T.P."/>
            <person name="Seemann T."/>
            <person name="Pidot S."/>
            <person name="Frigui W."/>
            <person name="Reysset G."/>
            <person name="Garnier T."/>
            <person name="Meurice G."/>
            <person name="Simon D."/>
            <person name="Bouchier C."/>
            <person name="Ma L."/>
            <person name="Tichit M."/>
            <person name="Porter J.L."/>
            <person name="Ryan J."/>
            <person name="Johnson P.D.R."/>
            <person name="Davies J.K."/>
            <person name="Jenkin G.A."/>
            <person name="Small P.L.C."/>
            <person name="Jones L.M."/>
            <person name="Tekaia F."/>
            <person name="Laval F."/>
            <person name="Daffe M."/>
            <person name="Parkhill J."/>
            <person name="Cole S.T."/>
        </authorList>
    </citation>
    <scope>NUCLEOTIDE SEQUENCE [LARGE SCALE GENOMIC DNA]</scope>
    <source>
        <strain>Agy99</strain>
    </source>
</reference>
<accession>A0PPX4</accession>
<evidence type="ECO:0000255" key="1">
    <source>
        <dbReference type="HAMAP-Rule" id="MF_00120"/>
    </source>
</evidence>
<organism>
    <name type="scientific">Mycobacterium ulcerans (strain Agy99)</name>
    <dbReference type="NCBI Taxonomy" id="362242"/>
    <lineage>
        <taxon>Bacteria</taxon>
        <taxon>Bacillati</taxon>
        <taxon>Actinomycetota</taxon>
        <taxon>Actinomycetes</taxon>
        <taxon>Mycobacteriales</taxon>
        <taxon>Mycobacteriaceae</taxon>
        <taxon>Mycobacterium</taxon>
        <taxon>Mycobacterium ulcerans group</taxon>
    </lineage>
</organism>
<feature type="chain" id="PRO_1000015868" description="Glutamyl-tRNA(Gln) amidotransferase subunit A">
    <location>
        <begin position="1"/>
        <end position="493"/>
    </location>
</feature>
<feature type="active site" description="Charge relay system" evidence="1">
    <location>
        <position position="81"/>
    </location>
</feature>
<feature type="active site" description="Charge relay system" evidence="1">
    <location>
        <position position="156"/>
    </location>
</feature>
<feature type="active site" description="Acyl-ester intermediate" evidence="1">
    <location>
        <position position="180"/>
    </location>
</feature>
<gene>
    <name evidence="1" type="primary">gatA</name>
    <name type="ordered locus">MUL_1939</name>
</gene>
<name>GATA_MYCUA</name>
<keyword id="KW-0067">ATP-binding</keyword>
<keyword id="KW-0436">Ligase</keyword>
<keyword id="KW-0547">Nucleotide-binding</keyword>
<keyword id="KW-0648">Protein biosynthesis</keyword>
<sequence>MTDLIRSDAATLAAKIAAKEVSATELTQACLDQIEATDDRYHAFLHIGAHEALSAAAAVDTALAAGERLPSALAGVPLALKDVFTTVDMPTTCGSKILEGWRSPYDATLTLRLRAAGIPILGKTNMDEFAMGSSTENSAYGPTRNPWNLDRVPGGSGGGSAAALAAYQAPLAIGSDTGGSIRQPAALTATVGVKPTYGTVSRYGLVACASSLDQGGPCARTVLDTAMLHQVIAGHDAKDSTSLETEIPDVVGAAKAGASGDLRGVRIGVVKQLRGDGYQPGVLASFEAAVAQLTALGAEVSEVDCPHFDHALAAYYLILPSEVSSNLARFDAMRYGLRIGDDGTHSAEEVMAMTRAAGFGPEVKRRIMIGAYALSAGYYDAYYNQAQKIRTLIARDLDEAYQSVDVLVSPATPTTAFPLGEKVDDPLAMYLFDLCTLPLNLAGHCGMSVPSGLSPDDGLPVGLQIMAPALADDRLYRVGAAYEAARGPLPSAI</sequence>
<proteinExistence type="inferred from homology"/>
<comment type="function">
    <text evidence="1">Allows the formation of correctly charged Gln-tRNA(Gln) through the transamidation of misacylated Glu-tRNA(Gln) in organisms which lack glutaminyl-tRNA synthetase. The reaction takes place in the presence of glutamine and ATP through an activated gamma-phospho-Glu-tRNA(Gln).</text>
</comment>
<comment type="catalytic activity">
    <reaction evidence="1">
        <text>L-glutamyl-tRNA(Gln) + L-glutamine + ATP + H2O = L-glutaminyl-tRNA(Gln) + L-glutamate + ADP + phosphate + H(+)</text>
        <dbReference type="Rhea" id="RHEA:17521"/>
        <dbReference type="Rhea" id="RHEA-COMP:9681"/>
        <dbReference type="Rhea" id="RHEA-COMP:9684"/>
        <dbReference type="ChEBI" id="CHEBI:15377"/>
        <dbReference type="ChEBI" id="CHEBI:15378"/>
        <dbReference type="ChEBI" id="CHEBI:29985"/>
        <dbReference type="ChEBI" id="CHEBI:30616"/>
        <dbReference type="ChEBI" id="CHEBI:43474"/>
        <dbReference type="ChEBI" id="CHEBI:58359"/>
        <dbReference type="ChEBI" id="CHEBI:78520"/>
        <dbReference type="ChEBI" id="CHEBI:78521"/>
        <dbReference type="ChEBI" id="CHEBI:456216"/>
        <dbReference type="EC" id="6.3.5.7"/>
    </reaction>
</comment>
<comment type="subunit">
    <text evidence="1">Heterotrimer of A, B and C subunits.</text>
</comment>
<comment type="similarity">
    <text evidence="1">Belongs to the amidase family. GatA subfamily.</text>
</comment>
<dbReference type="EC" id="6.3.5.7" evidence="1"/>
<dbReference type="EMBL" id="CP000325">
    <property type="protein sequence ID" value="ABL04393.1"/>
    <property type="molecule type" value="Genomic_DNA"/>
</dbReference>
<dbReference type="RefSeq" id="WP_011740012.1">
    <property type="nucleotide sequence ID" value="NC_008611.1"/>
</dbReference>
<dbReference type="SMR" id="A0PPX4"/>
<dbReference type="KEGG" id="mul:MUL_1939"/>
<dbReference type="eggNOG" id="COG0154">
    <property type="taxonomic scope" value="Bacteria"/>
</dbReference>
<dbReference type="HOGENOM" id="CLU_009600_0_3_11"/>
<dbReference type="Proteomes" id="UP000000765">
    <property type="component" value="Chromosome"/>
</dbReference>
<dbReference type="GO" id="GO:0030956">
    <property type="term" value="C:glutamyl-tRNA(Gln) amidotransferase complex"/>
    <property type="evidence" value="ECO:0007669"/>
    <property type="project" value="InterPro"/>
</dbReference>
<dbReference type="GO" id="GO:0005524">
    <property type="term" value="F:ATP binding"/>
    <property type="evidence" value="ECO:0007669"/>
    <property type="project" value="UniProtKB-KW"/>
</dbReference>
<dbReference type="GO" id="GO:0050567">
    <property type="term" value="F:glutaminyl-tRNA synthase (glutamine-hydrolyzing) activity"/>
    <property type="evidence" value="ECO:0007669"/>
    <property type="project" value="UniProtKB-UniRule"/>
</dbReference>
<dbReference type="GO" id="GO:0006412">
    <property type="term" value="P:translation"/>
    <property type="evidence" value="ECO:0007669"/>
    <property type="project" value="UniProtKB-UniRule"/>
</dbReference>
<dbReference type="Gene3D" id="3.90.1300.10">
    <property type="entry name" value="Amidase signature (AS) domain"/>
    <property type="match status" value="1"/>
</dbReference>
<dbReference type="HAMAP" id="MF_00120">
    <property type="entry name" value="GatA"/>
    <property type="match status" value="1"/>
</dbReference>
<dbReference type="InterPro" id="IPR000120">
    <property type="entry name" value="Amidase"/>
</dbReference>
<dbReference type="InterPro" id="IPR020556">
    <property type="entry name" value="Amidase_CS"/>
</dbReference>
<dbReference type="InterPro" id="IPR023631">
    <property type="entry name" value="Amidase_dom"/>
</dbReference>
<dbReference type="InterPro" id="IPR036928">
    <property type="entry name" value="AS_sf"/>
</dbReference>
<dbReference type="InterPro" id="IPR004412">
    <property type="entry name" value="GatA"/>
</dbReference>
<dbReference type="NCBIfam" id="TIGR00132">
    <property type="entry name" value="gatA"/>
    <property type="match status" value="1"/>
</dbReference>
<dbReference type="PANTHER" id="PTHR11895:SF151">
    <property type="entry name" value="GLUTAMYL-TRNA(GLN) AMIDOTRANSFERASE SUBUNIT A"/>
    <property type="match status" value="1"/>
</dbReference>
<dbReference type="PANTHER" id="PTHR11895">
    <property type="entry name" value="TRANSAMIDASE"/>
    <property type="match status" value="1"/>
</dbReference>
<dbReference type="Pfam" id="PF01425">
    <property type="entry name" value="Amidase"/>
    <property type="match status" value="1"/>
</dbReference>
<dbReference type="SUPFAM" id="SSF75304">
    <property type="entry name" value="Amidase signature (AS) enzymes"/>
    <property type="match status" value="1"/>
</dbReference>
<dbReference type="PROSITE" id="PS00571">
    <property type="entry name" value="AMIDASES"/>
    <property type="match status" value="1"/>
</dbReference>